<organism>
    <name type="scientific">Eisenia fetida</name>
    <name type="common">Red wiggler worm</name>
    <dbReference type="NCBI Taxonomy" id="6396"/>
    <lineage>
        <taxon>Eukaryota</taxon>
        <taxon>Metazoa</taxon>
        <taxon>Spiralia</taxon>
        <taxon>Lophotrochozoa</taxon>
        <taxon>Annelida</taxon>
        <taxon>Clitellata</taxon>
        <taxon>Oligochaeta</taxon>
        <taxon>Crassiclitellata</taxon>
        <taxon>Lumbricina</taxon>
        <taxon>Lumbricidae</taxon>
        <taxon>Lumbricinae</taxon>
        <taxon>Eisenia</taxon>
    </lineage>
</organism>
<proteinExistence type="evidence at protein level"/>
<reference key="1">
    <citation type="journal article" date="1976" name="FEBS Lett.">
        <title>The amino acid sequence of cytochrome c from Eisenia foetida (Savigny) (common brandling worm).</title>
        <authorList>
            <person name="Lyddiatt A."/>
            <person name="Boulter D."/>
        </authorList>
    </citation>
    <scope>PROTEIN SEQUENCE</scope>
</reference>
<accession>P00030</accession>
<keyword id="KW-0903">Direct protein sequencing</keyword>
<keyword id="KW-0249">Electron transport</keyword>
<keyword id="KW-0349">Heme</keyword>
<keyword id="KW-0408">Iron</keyword>
<keyword id="KW-0479">Metal-binding</keyword>
<keyword id="KW-0496">Mitochondrion</keyword>
<keyword id="KW-0679">Respiratory chain</keyword>
<keyword id="KW-0813">Transport</keyword>
<evidence type="ECO:0000305" key="1"/>
<feature type="chain" id="PRO_0000108275" description="Cytochrome c">
    <location>
        <begin position="1"/>
        <end position="108"/>
    </location>
</feature>
<feature type="binding site" description="covalent">
    <location>
        <position position="19"/>
    </location>
    <ligand>
        <name>heme c</name>
        <dbReference type="ChEBI" id="CHEBI:61717"/>
    </ligand>
</feature>
<feature type="binding site" description="covalent">
    <location>
        <position position="22"/>
    </location>
    <ligand>
        <name>heme c</name>
        <dbReference type="ChEBI" id="CHEBI:61717"/>
    </ligand>
</feature>
<feature type="binding site" description="axial binding residue">
    <location>
        <position position="23"/>
    </location>
    <ligand>
        <name>heme c</name>
        <dbReference type="ChEBI" id="CHEBI:61717"/>
    </ligand>
    <ligandPart>
        <name>Fe</name>
        <dbReference type="ChEBI" id="CHEBI:18248"/>
    </ligandPart>
</feature>
<feature type="binding site" description="axial binding residue">
    <location>
        <position position="85"/>
    </location>
    <ligand>
        <name>heme c</name>
        <dbReference type="ChEBI" id="CHEBI:61717"/>
    </ligand>
    <ligandPart>
        <name>Fe</name>
        <dbReference type="ChEBI" id="CHEBI:18248"/>
    </ligandPart>
</feature>
<dbReference type="PIR" id="A00027">
    <property type="entry name" value="CCWB"/>
</dbReference>
<dbReference type="SMR" id="P00030"/>
<dbReference type="GO" id="GO:0005758">
    <property type="term" value="C:mitochondrial intermembrane space"/>
    <property type="evidence" value="ECO:0007669"/>
    <property type="project" value="UniProtKB-SubCell"/>
</dbReference>
<dbReference type="GO" id="GO:0009055">
    <property type="term" value="F:electron transfer activity"/>
    <property type="evidence" value="ECO:0007669"/>
    <property type="project" value="InterPro"/>
</dbReference>
<dbReference type="GO" id="GO:0020037">
    <property type="term" value="F:heme binding"/>
    <property type="evidence" value="ECO:0007669"/>
    <property type="project" value="InterPro"/>
</dbReference>
<dbReference type="GO" id="GO:0046872">
    <property type="term" value="F:metal ion binding"/>
    <property type="evidence" value="ECO:0007669"/>
    <property type="project" value="UniProtKB-KW"/>
</dbReference>
<dbReference type="FunFam" id="1.10.760.10:FF:000001">
    <property type="entry name" value="Cytochrome c iso-1"/>
    <property type="match status" value="1"/>
</dbReference>
<dbReference type="Gene3D" id="1.10.760.10">
    <property type="entry name" value="Cytochrome c-like domain"/>
    <property type="match status" value="1"/>
</dbReference>
<dbReference type="InterPro" id="IPR009056">
    <property type="entry name" value="Cyt_c-like_dom"/>
</dbReference>
<dbReference type="InterPro" id="IPR036909">
    <property type="entry name" value="Cyt_c-like_dom_sf"/>
</dbReference>
<dbReference type="InterPro" id="IPR002327">
    <property type="entry name" value="Cyt_c_1A/1B"/>
</dbReference>
<dbReference type="PANTHER" id="PTHR11961">
    <property type="entry name" value="CYTOCHROME C"/>
    <property type="match status" value="1"/>
</dbReference>
<dbReference type="Pfam" id="PF00034">
    <property type="entry name" value="Cytochrom_C"/>
    <property type="match status" value="1"/>
</dbReference>
<dbReference type="PRINTS" id="PR00604">
    <property type="entry name" value="CYTCHRMECIAB"/>
</dbReference>
<dbReference type="SUPFAM" id="SSF46626">
    <property type="entry name" value="Cytochrome c"/>
    <property type="match status" value="1"/>
</dbReference>
<dbReference type="PROSITE" id="PS51007">
    <property type="entry name" value="CYTC"/>
    <property type="match status" value="1"/>
</dbReference>
<name>CYC_EISFE</name>
<protein>
    <recommendedName>
        <fullName>Cytochrome c</fullName>
    </recommendedName>
</protein>
<sequence>GGIPAGDVEKGKTIFKQRCAQCHTVDKGGPHKTGPNLHGIFGRATGQAAGFAYTDANKSKGITWTKDTLYEYLENPKKYIPGTKMVFAGLKNEKQRANLIAYLEQETK</sequence>
<comment type="function">
    <text>Electron carrier protein. The oxidized form of the cytochrome c heme group can accept an electron from the heme group of the cytochrome c1 subunit of cytochrome reductase. Cytochrome c then transfers this electron to the cytochrome oxidase complex, the final protein carrier in the mitochondrial electron-transport chain.</text>
</comment>
<comment type="subcellular location">
    <subcellularLocation>
        <location>Mitochondrion intermembrane space</location>
    </subcellularLocation>
    <text>Loosely associated with the inner membrane.</text>
</comment>
<comment type="PTM">
    <text>Binds 1 heme c group covalently per subunit.</text>
</comment>
<comment type="similarity">
    <text evidence="1">Belongs to the cytochrome c family.</text>
</comment>
<comment type="online information" name="Protein Spotlight">
    <link uri="https://www.proteinspotlight.org/back_issues/076"/>
    <text>Life shuttle - Issue 76 of November 2006</text>
</comment>